<name>CC50C_BOVIN</name>
<comment type="subcellular location">
    <subcellularLocation>
        <location evidence="2">Membrane</location>
        <topology evidence="2">Multi-pass membrane protein</topology>
    </subcellularLocation>
</comment>
<comment type="similarity">
    <text evidence="2">Belongs to the CDC50/LEM3 family.</text>
</comment>
<dbReference type="EMBL" id="BC111328">
    <property type="protein sequence ID" value="AAI11329.1"/>
    <property type="molecule type" value="mRNA"/>
</dbReference>
<dbReference type="RefSeq" id="NP_001033239.1">
    <property type="nucleotide sequence ID" value="NM_001038150.2"/>
</dbReference>
<dbReference type="SMR" id="Q2T9P5"/>
<dbReference type="FunCoup" id="Q2T9P5">
    <property type="interactions" value="489"/>
</dbReference>
<dbReference type="STRING" id="9913.ENSBTAP00000068724"/>
<dbReference type="GlyCosmos" id="Q2T9P5">
    <property type="glycosylation" value="4 sites, No reported glycans"/>
</dbReference>
<dbReference type="GlyGen" id="Q2T9P5">
    <property type="glycosylation" value="4 sites"/>
</dbReference>
<dbReference type="PaxDb" id="9913-ENSBTAP00000018165"/>
<dbReference type="Ensembl" id="ENSBTAT00000018165.6">
    <property type="protein sequence ID" value="ENSBTAP00000018165.5"/>
    <property type="gene ID" value="ENSBTAG00000013667.7"/>
</dbReference>
<dbReference type="GeneID" id="531379"/>
<dbReference type="KEGG" id="bta:531379"/>
<dbReference type="CTD" id="71027"/>
<dbReference type="VEuPathDB" id="HostDB:ENSBTAG00000013667"/>
<dbReference type="VGNC" id="VGNC:108949">
    <property type="gene designation" value="TMEM30C"/>
</dbReference>
<dbReference type="eggNOG" id="KOG2952">
    <property type="taxonomic scope" value="Eukaryota"/>
</dbReference>
<dbReference type="GeneTree" id="ENSGT00390000004660"/>
<dbReference type="HOGENOM" id="CLU_025025_1_0_1"/>
<dbReference type="InParanoid" id="Q2T9P5"/>
<dbReference type="OMA" id="NDIFWLH"/>
<dbReference type="OrthoDB" id="340608at2759"/>
<dbReference type="TreeFam" id="TF300873"/>
<dbReference type="Proteomes" id="UP000009136">
    <property type="component" value="Chromosome 1"/>
</dbReference>
<dbReference type="Bgee" id="ENSBTAG00000013667">
    <property type="expression patterns" value="Expressed in spermatid and 36 other cell types or tissues"/>
</dbReference>
<dbReference type="GO" id="GO:0005783">
    <property type="term" value="C:endoplasmic reticulum"/>
    <property type="evidence" value="ECO:0000318"/>
    <property type="project" value="GO_Central"/>
</dbReference>
<dbReference type="GO" id="GO:0005794">
    <property type="term" value="C:Golgi apparatus"/>
    <property type="evidence" value="ECO:0000318"/>
    <property type="project" value="GO_Central"/>
</dbReference>
<dbReference type="GO" id="GO:0005886">
    <property type="term" value="C:plasma membrane"/>
    <property type="evidence" value="ECO:0000318"/>
    <property type="project" value="GO_Central"/>
</dbReference>
<dbReference type="GO" id="GO:0045332">
    <property type="term" value="P:phospholipid translocation"/>
    <property type="evidence" value="ECO:0000318"/>
    <property type="project" value="GO_Central"/>
</dbReference>
<dbReference type="InterPro" id="IPR005045">
    <property type="entry name" value="CDC50/LEM3_fam"/>
</dbReference>
<dbReference type="PANTHER" id="PTHR10926">
    <property type="entry name" value="CELL CYCLE CONTROL PROTEIN 50"/>
    <property type="match status" value="1"/>
</dbReference>
<dbReference type="PANTHER" id="PTHR10926:SF1">
    <property type="entry name" value="CELL CYCLE CONTROL PROTEIN 50C"/>
    <property type="match status" value="1"/>
</dbReference>
<dbReference type="Pfam" id="PF03381">
    <property type="entry name" value="CDC50"/>
    <property type="match status" value="1"/>
</dbReference>
<dbReference type="PIRSF" id="PIRSF015840">
    <property type="entry name" value="DUF284_TM_euk"/>
    <property type="match status" value="1"/>
</dbReference>
<protein>
    <recommendedName>
        <fullName>Cell cycle control protein 50C</fullName>
    </recommendedName>
    <alternativeName>
        <fullName>Transmembrane protein 30C</fullName>
    </alternativeName>
</protein>
<sequence length="343" mass="39022">MKRKCQDYESRLPDNTAVKQQQLPAFRLQLTASEILSGFFAIGLFCLGMGIILLLSAKSIKEVEINYTEKCATCAKLREEATNFDKECNCSISFYLPQKMEGNVYLYYKLYGFYQNLYRYILSRSNIQLVGADVKDVRNCAPFRTSDNGLPIAPCGAIANSMFNDTIVLWYNFNSSTHIRVPMVRTETAWWTDKYVKFQNPAFQNLSSAFAGTAKPPNWPKPVYELDENDPGNNGFINDDFIVWMRTAAFPNFKKLYRRLHRIGNFTEGLPAGSYSFIINYNFPVSRFQGQKAVVLSTLTWSGGSSLFLALAYLVTGAVTLLASFSMMALHLKLKERKTFFLQ</sequence>
<accession>Q2T9P5</accession>
<reference key="1">
    <citation type="submission" date="2005-12" db="EMBL/GenBank/DDBJ databases">
        <authorList>
            <consortium name="NIH - Mammalian Gene Collection (MGC) project"/>
        </authorList>
    </citation>
    <scope>NUCLEOTIDE SEQUENCE [LARGE SCALE MRNA]</scope>
    <source>
        <strain>Crossbred X Angus</strain>
        <tissue>Liver</tissue>
    </source>
</reference>
<feature type="chain" id="PRO_0000292844" description="Cell cycle control protein 50C">
    <location>
        <begin position="1"/>
        <end position="343"/>
    </location>
</feature>
<feature type="topological domain" description="Cytoplasmic" evidence="1">
    <location>
        <begin position="1"/>
        <end position="34"/>
    </location>
</feature>
<feature type="transmembrane region" description="Helical" evidence="1">
    <location>
        <begin position="35"/>
        <end position="55"/>
    </location>
</feature>
<feature type="topological domain" description="Extracellular" evidence="1">
    <location>
        <begin position="56"/>
        <end position="306"/>
    </location>
</feature>
<feature type="transmembrane region" description="Helical" evidence="1">
    <location>
        <begin position="307"/>
        <end position="327"/>
    </location>
</feature>
<feature type="topological domain" description="Cytoplasmic" evidence="1">
    <location>
        <begin position="328"/>
        <end position="343"/>
    </location>
</feature>
<feature type="glycosylation site" description="N-linked (GlcNAc...) asparagine" evidence="1">
    <location>
        <position position="66"/>
    </location>
</feature>
<feature type="glycosylation site" description="N-linked (GlcNAc...) asparagine" evidence="1">
    <location>
        <position position="164"/>
    </location>
</feature>
<feature type="glycosylation site" description="N-linked (GlcNAc...) asparagine" evidence="1">
    <location>
        <position position="205"/>
    </location>
</feature>
<feature type="glycosylation site" description="N-linked (GlcNAc...) asparagine" evidence="1">
    <location>
        <position position="265"/>
    </location>
</feature>
<proteinExistence type="evidence at transcript level"/>
<keyword id="KW-0325">Glycoprotein</keyword>
<keyword id="KW-0472">Membrane</keyword>
<keyword id="KW-1185">Reference proteome</keyword>
<keyword id="KW-0812">Transmembrane</keyword>
<keyword id="KW-1133">Transmembrane helix</keyword>
<gene>
    <name type="primary">TMEM30C</name>
    <name type="synonym">CDC50C</name>
</gene>
<organism>
    <name type="scientific">Bos taurus</name>
    <name type="common">Bovine</name>
    <dbReference type="NCBI Taxonomy" id="9913"/>
    <lineage>
        <taxon>Eukaryota</taxon>
        <taxon>Metazoa</taxon>
        <taxon>Chordata</taxon>
        <taxon>Craniata</taxon>
        <taxon>Vertebrata</taxon>
        <taxon>Euteleostomi</taxon>
        <taxon>Mammalia</taxon>
        <taxon>Eutheria</taxon>
        <taxon>Laurasiatheria</taxon>
        <taxon>Artiodactyla</taxon>
        <taxon>Ruminantia</taxon>
        <taxon>Pecora</taxon>
        <taxon>Bovidae</taxon>
        <taxon>Bovinae</taxon>
        <taxon>Bos</taxon>
    </lineage>
</organism>
<evidence type="ECO:0000255" key="1"/>
<evidence type="ECO:0000305" key="2"/>